<comment type="function">
    <text evidence="1">Binds 16S rRNA, required for the assembly of 30S particles and may also be responsible for determining the conformation of the 16S rRNA at the A site.</text>
</comment>
<comment type="subunit">
    <text evidence="1">Part of the 30S ribosomal subunit. Contacts proteins S3 and S10.</text>
</comment>
<comment type="similarity">
    <text evidence="1">Belongs to the universal ribosomal protein uS14 family.</text>
</comment>
<accession>Q89A79</accession>
<sequence length="101" mass="11880">MAKQSMKAREVKRIKLAKKFYSRREHLKSIISDLSVLEQDRWKAVLKLQTFPRDSSPIRQRNRCSQTGRPHAFLRKFGLSRIKVREAAMRGEIPGLKKSSW</sequence>
<reference key="1">
    <citation type="journal article" date="2003" name="Proc. Natl. Acad. Sci. U.S.A.">
        <title>Reductive genome evolution in Buchnera aphidicola.</title>
        <authorList>
            <person name="van Ham R.C.H.J."/>
            <person name="Kamerbeek J."/>
            <person name="Palacios C."/>
            <person name="Rausell C."/>
            <person name="Abascal F."/>
            <person name="Bastolla U."/>
            <person name="Fernandez J.M."/>
            <person name="Jimenez L."/>
            <person name="Postigo M."/>
            <person name="Silva F.J."/>
            <person name="Tamames J."/>
            <person name="Viguera E."/>
            <person name="Latorre A."/>
            <person name="Valencia A."/>
            <person name="Moran F."/>
            <person name="Moya A."/>
        </authorList>
    </citation>
    <scope>NUCLEOTIDE SEQUENCE [LARGE SCALE GENOMIC DNA]</scope>
    <source>
        <strain>Bp</strain>
    </source>
</reference>
<protein>
    <recommendedName>
        <fullName evidence="1">Small ribosomal subunit protein uS14</fullName>
    </recommendedName>
    <alternativeName>
        <fullName evidence="2">30S ribosomal protein S14</fullName>
    </alternativeName>
</protein>
<keyword id="KW-1185">Reference proteome</keyword>
<keyword id="KW-0687">Ribonucleoprotein</keyword>
<keyword id="KW-0689">Ribosomal protein</keyword>
<keyword id="KW-0694">RNA-binding</keyword>
<keyword id="KW-0699">rRNA-binding</keyword>
<gene>
    <name evidence="1" type="primary">rpsN</name>
    <name type="ordered locus">bbp_454</name>
</gene>
<evidence type="ECO:0000255" key="1">
    <source>
        <dbReference type="HAMAP-Rule" id="MF_00537"/>
    </source>
</evidence>
<evidence type="ECO:0000305" key="2"/>
<organism>
    <name type="scientific">Buchnera aphidicola subsp. Baizongia pistaciae (strain Bp)</name>
    <dbReference type="NCBI Taxonomy" id="224915"/>
    <lineage>
        <taxon>Bacteria</taxon>
        <taxon>Pseudomonadati</taxon>
        <taxon>Pseudomonadota</taxon>
        <taxon>Gammaproteobacteria</taxon>
        <taxon>Enterobacterales</taxon>
        <taxon>Erwiniaceae</taxon>
        <taxon>Buchnera</taxon>
    </lineage>
</organism>
<name>RS14_BUCBP</name>
<feature type="chain" id="PRO_0000130880" description="Small ribosomal subunit protein uS14">
    <location>
        <begin position="1"/>
        <end position="101"/>
    </location>
</feature>
<proteinExistence type="inferred from homology"/>
<dbReference type="EMBL" id="AE016826">
    <property type="protein sequence ID" value="AAO27160.1"/>
    <property type="molecule type" value="Genomic_DNA"/>
</dbReference>
<dbReference type="RefSeq" id="WP_011091561.1">
    <property type="nucleotide sequence ID" value="NC_004545.1"/>
</dbReference>
<dbReference type="SMR" id="Q89A79"/>
<dbReference type="STRING" id="224915.bbp_454"/>
<dbReference type="KEGG" id="bab:bbp_454"/>
<dbReference type="eggNOG" id="COG0199">
    <property type="taxonomic scope" value="Bacteria"/>
</dbReference>
<dbReference type="HOGENOM" id="CLU_139869_0_1_6"/>
<dbReference type="OrthoDB" id="9810484at2"/>
<dbReference type="Proteomes" id="UP000000601">
    <property type="component" value="Chromosome"/>
</dbReference>
<dbReference type="GO" id="GO:0005737">
    <property type="term" value="C:cytoplasm"/>
    <property type="evidence" value="ECO:0007669"/>
    <property type="project" value="UniProtKB-ARBA"/>
</dbReference>
<dbReference type="GO" id="GO:0015935">
    <property type="term" value="C:small ribosomal subunit"/>
    <property type="evidence" value="ECO:0007669"/>
    <property type="project" value="TreeGrafter"/>
</dbReference>
<dbReference type="GO" id="GO:0019843">
    <property type="term" value="F:rRNA binding"/>
    <property type="evidence" value="ECO:0007669"/>
    <property type="project" value="UniProtKB-UniRule"/>
</dbReference>
<dbReference type="GO" id="GO:0003735">
    <property type="term" value="F:structural constituent of ribosome"/>
    <property type="evidence" value="ECO:0007669"/>
    <property type="project" value="InterPro"/>
</dbReference>
<dbReference type="GO" id="GO:0006412">
    <property type="term" value="P:translation"/>
    <property type="evidence" value="ECO:0007669"/>
    <property type="project" value="UniProtKB-UniRule"/>
</dbReference>
<dbReference type="FunFam" id="1.10.287.1480:FF:000001">
    <property type="entry name" value="30S ribosomal protein S14"/>
    <property type="match status" value="1"/>
</dbReference>
<dbReference type="Gene3D" id="1.10.287.1480">
    <property type="match status" value="1"/>
</dbReference>
<dbReference type="HAMAP" id="MF_00537">
    <property type="entry name" value="Ribosomal_uS14_1"/>
    <property type="match status" value="1"/>
</dbReference>
<dbReference type="InterPro" id="IPR001209">
    <property type="entry name" value="Ribosomal_uS14"/>
</dbReference>
<dbReference type="InterPro" id="IPR023036">
    <property type="entry name" value="Ribosomal_uS14_bac/plastid"/>
</dbReference>
<dbReference type="InterPro" id="IPR018271">
    <property type="entry name" value="Ribosomal_uS14_CS"/>
</dbReference>
<dbReference type="NCBIfam" id="NF006477">
    <property type="entry name" value="PRK08881.1"/>
    <property type="match status" value="1"/>
</dbReference>
<dbReference type="PANTHER" id="PTHR19836">
    <property type="entry name" value="30S RIBOSOMAL PROTEIN S14"/>
    <property type="match status" value="1"/>
</dbReference>
<dbReference type="PANTHER" id="PTHR19836:SF19">
    <property type="entry name" value="SMALL RIBOSOMAL SUBUNIT PROTEIN US14M"/>
    <property type="match status" value="1"/>
</dbReference>
<dbReference type="Pfam" id="PF00253">
    <property type="entry name" value="Ribosomal_S14"/>
    <property type="match status" value="1"/>
</dbReference>
<dbReference type="SUPFAM" id="SSF57716">
    <property type="entry name" value="Glucocorticoid receptor-like (DNA-binding domain)"/>
    <property type="match status" value="1"/>
</dbReference>
<dbReference type="PROSITE" id="PS00527">
    <property type="entry name" value="RIBOSOMAL_S14"/>
    <property type="match status" value="1"/>
</dbReference>